<name>IRC22_KLULA</name>
<proteinExistence type="inferred from homology"/>
<feature type="signal peptide" evidence="2">
    <location>
        <begin position="1"/>
        <end position="18"/>
    </location>
</feature>
<feature type="chain" id="PRO_0000399079" description="Increased recombination centers protein 22">
    <location>
        <begin position="19"/>
        <end position="238"/>
    </location>
</feature>
<feature type="topological domain" description="Lumenal" evidence="2">
    <location>
        <begin position="19"/>
        <end position="191"/>
    </location>
</feature>
<feature type="transmembrane region" description="Helical" evidence="2">
    <location>
        <begin position="192"/>
        <end position="212"/>
    </location>
</feature>
<feature type="topological domain" description="Cytoplasmic" evidence="2">
    <location>
        <begin position="213"/>
        <end position="238"/>
    </location>
</feature>
<feature type="region of interest" description="Disordered" evidence="3">
    <location>
        <begin position="219"/>
        <end position="238"/>
    </location>
</feature>
<dbReference type="EMBL" id="CR382124">
    <property type="protein sequence ID" value="CAH00774.1"/>
    <property type="molecule type" value="Genomic_DNA"/>
</dbReference>
<dbReference type="RefSeq" id="XP_453678.1">
    <property type="nucleotide sequence ID" value="XM_453678.1"/>
</dbReference>
<dbReference type="FunCoup" id="Q6CQW1">
    <property type="interactions" value="41"/>
</dbReference>
<dbReference type="STRING" id="284590.Q6CQW1"/>
<dbReference type="PaxDb" id="284590-Q6CQW1"/>
<dbReference type="KEGG" id="kla:KLLA0_D13816g"/>
<dbReference type="eggNOG" id="ENOG502S3VP">
    <property type="taxonomic scope" value="Eukaryota"/>
</dbReference>
<dbReference type="HOGENOM" id="CLU_078554_1_0_1"/>
<dbReference type="InParanoid" id="Q6CQW1"/>
<dbReference type="OMA" id="WLPETYK"/>
<dbReference type="Proteomes" id="UP000000598">
    <property type="component" value="Chromosome D"/>
</dbReference>
<dbReference type="GO" id="GO:0005789">
    <property type="term" value="C:endoplasmic reticulum membrane"/>
    <property type="evidence" value="ECO:0007669"/>
    <property type="project" value="UniProtKB-SubCell"/>
</dbReference>
<dbReference type="InterPro" id="IPR005595">
    <property type="entry name" value="TRAP_alpha"/>
</dbReference>
<dbReference type="Pfam" id="PF03896">
    <property type="entry name" value="TRAP_alpha"/>
    <property type="match status" value="1"/>
</dbReference>
<keyword id="KW-0256">Endoplasmic reticulum</keyword>
<keyword id="KW-0472">Membrane</keyword>
<keyword id="KW-1185">Reference proteome</keyword>
<keyword id="KW-0732">Signal</keyword>
<keyword id="KW-0812">Transmembrane</keyword>
<keyword id="KW-1133">Transmembrane helix</keyword>
<organism>
    <name type="scientific">Kluyveromyces lactis (strain ATCC 8585 / CBS 2359 / DSM 70799 / NBRC 1267 / NRRL Y-1140 / WM37)</name>
    <name type="common">Yeast</name>
    <name type="synonym">Candida sphaerica</name>
    <dbReference type="NCBI Taxonomy" id="284590"/>
    <lineage>
        <taxon>Eukaryota</taxon>
        <taxon>Fungi</taxon>
        <taxon>Dikarya</taxon>
        <taxon>Ascomycota</taxon>
        <taxon>Saccharomycotina</taxon>
        <taxon>Saccharomycetes</taxon>
        <taxon>Saccharomycetales</taxon>
        <taxon>Saccharomycetaceae</taxon>
        <taxon>Kluyveromyces</taxon>
    </lineage>
</organism>
<reference key="1">
    <citation type="journal article" date="2004" name="Nature">
        <title>Genome evolution in yeasts.</title>
        <authorList>
            <person name="Dujon B."/>
            <person name="Sherman D."/>
            <person name="Fischer G."/>
            <person name="Durrens P."/>
            <person name="Casaregola S."/>
            <person name="Lafontaine I."/>
            <person name="de Montigny J."/>
            <person name="Marck C."/>
            <person name="Neuveglise C."/>
            <person name="Talla E."/>
            <person name="Goffard N."/>
            <person name="Frangeul L."/>
            <person name="Aigle M."/>
            <person name="Anthouard V."/>
            <person name="Babour A."/>
            <person name="Barbe V."/>
            <person name="Barnay S."/>
            <person name="Blanchin S."/>
            <person name="Beckerich J.-M."/>
            <person name="Beyne E."/>
            <person name="Bleykasten C."/>
            <person name="Boisrame A."/>
            <person name="Boyer J."/>
            <person name="Cattolico L."/>
            <person name="Confanioleri F."/>
            <person name="de Daruvar A."/>
            <person name="Despons L."/>
            <person name="Fabre E."/>
            <person name="Fairhead C."/>
            <person name="Ferry-Dumazet H."/>
            <person name="Groppi A."/>
            <person name="Hantraye F."/>
            <person name="Hennequin C."/>
            <person name="Jauniaux N."/>
            <person name="Joyet P."/>
            <person name="Kachouri R."/>
            <person name="Kerrest A."/>
            <person name="Koszul R."/>
            <person name="Lemaire M."/>
            <person name="Lesur I."/>
            <person name="Ma L."/>
            <person name="Muller H."/>
            <person name="Nicaud J.-M."/>
            <person name="Nikolski M."/>
            <person name="Oztas S."/>
            <person name="Ozier-Kalogeropoulos O."/>
            <person name="Pellenz S."/>
            <person name="Potier S."/>
            <person name="Richard G.-F."/>
            <person name="Straub M.-L."/>
            <person name="Suleau A."/>
            <person name="Swennen D."/>
            <person name="Tekaia F."/>
            <person name="Wesolowski-Louvel M."/>
            <person name="Westhof E."/>
            <person name="Wirth B."/>
            <person name="Zeniou-Meyer M."/>
            <person name="Zivanovic Y."/>
            <person name="Bolotin-Fukuhara M."/>
            <person name="Thierry A."/>
            <person name="Bouchier C."/>
            <person name="Caudron B."/>
            <person name="Scarpelli C."/>
            <person name="Gaillardin C."/>
            <person name="Weissenbach J."/>
            <person name="Wincker P."/>
            <person name="Souciet J.-L."/>
        </authorList>
    </citation>
    <scope>NUCLEOTIDE SEQUENCE [LARGE SCALE GENOMIC DNA]</scope>
    <source>
        <strain>ATCC 8585 / CBS 2359 / DSM 70799 / NBRC 1267 / NRRL Y-1140 / WM37</strain>
    </source>
</reference>
<protein>
    <recommendedName>
        <fullName>Increased recombination centers protein 22</fullName>
    </recommendedName>
</protein>
<accession>Q6CQW1</accession>
<sequence>MKFLKVALIFSALSGVYADLEHNLRIHNDIPVEYDSDAASADIGSEDEPHQQEPKIANFLIEYDVLEEDGRISSGLIEVENGKSLSFSYNFTNSEDADVNVYAFGGSIIDMGSSQIIADIPRTDFSPVHVAINESARLLQKLPIDLPEGILYVLPHIYVDKDGEQMKVGASPISIQVVPPPLSIFNPQFLSIQLFLLGLVAAISYYVFGFSFKTTKQPVKKQNRASNSNEWLPETHIK</sequence>
<gene>
    <name type="primary">IRC22</name>
    <name type="ordered locus">KLLA0D13816g</name>
</gene>
<comment type="function">
    <text>Is probably involved in a pathway contributing to genomic integrity.</text>
</comment>
<comment type="subcellular location">
    <subcellularLocation>
        <location evidence="1">Endoplasmic reticulum membrane</location>
        <topology evidence="1">Single-pass type I membrane protein</topology>
    </subcellularLocation>
</comment>
<comment type="similarity">
    <text evidence="4">Belongs to the IRC22 family.</text>
</comment>
<evidence type="ECO:0000250" key="1"/>
<evidence type="ECO:0000255" key="2"/>
<evidence type="ECO:0000256" key="3">
    <source>
        <dbReference type="SAM" id="MobiDB-lite"/>
    </source>
</evidence>
<evidence type="ECO:0000305" key="4"/>